<name>G3P_KLEAE</name>
<feature type="chain" id="PRO_0000145660" description="Glyceraldehyde-3-phosphate dehydrogenase">
    <location>
        <begin position="1" status="less than"/>
        <end position="294" status="greater than"/>
    </location>
</feature>
<feature type="active site" description="Nucleophile" evidence="1">
    <location>
        <position position="135"/>
    </location>
</feature>
<feature type="binding site" evidence="1">
    <location>
        <position position="19"/>
    </location>
    <ligand>
        <name>NAD(+)</name>
        <dbReference type="ChEBI" id="CHEBI:57540"/>
    </ligand>
</feature>
<feature type="binding site" evidence="1">
    <location>
        <position position="63"/>
    </location>
    <ligand>
        <name>NAD(+)</name>
        <dbReference type="ChEBI" id="CHEBI:57540"/>
    </ligand>
</feature>
<feature type="binding site" evidence="1">
    <location>
        <position position="105"/>
    </location>
    <ligand>
        <name>NAD(+)</name>
        <dbReference type="ChEBI" id="CHEBI:57540"/>
    </ligand>
</feature>
<feature type="binding site" evidence="1">
    <location>
        <begin position="134"/>
        <end position="136"/>
    </location>
    <ligand>
        <name>D-glyceraldehyde 3-phosphate</name>
        <dbReference type="ChEBI" id="CHEBI:59776"/>
    </ligand>
</feature>
<feature type="binding site" evidence="1">
    <location>
        <position position="165"/>
    </location>
    <ligand>
        <name>D-glyceraldehyde 3-phosphate</name>
        <dbReference type="ChEBI" id="CHEBI:59776"/>
    </ligand>
</feature>
<feature type="binding site" evidence="1">
    <location>
        <begin position="194"/>
        <end position="195"/>
    </location>
    <ligand>
        <name>D-glyceraldehyde 3-phosphate</name>
        <dbReference type="ChEBI" id="CHEBI:59776"/>
    </ligand>
</feature>
<feature type="binding site" evidence="1">
    <location>
        <position position="217"/>
    </location>
    <ligand>
        <name>D-glyceraldehyde 3-phosphate</name>
        <dbReference type="ChEBI" id="CHEBI:59776"/>
    </ligand>
</feature>
<feature type="site" description="Activates thiol group during catalysis" evidence="1">
    <location>
        <position position="162"/>
    </location>
</feature>
<feature type="non-terminal residue">
    <location>
        <position position="1"/>
    </location>
</feature>
<feature type="non-terminal residue">
    <location>
        <position position="294"/>
    </location>
</feature>
<keyword id="KW-0963">Cytoplasm</keyword>
<keyword id="KW-0324">Glycolysis</keyword>
<keyword id="KW-0520">NAD</keyword>
<keyword id="KW-0547">Nucleotide-binding</keyword>
<keyword id="KW-0560">Oxidoreductase</keyword>
<evidence type="ECO:0000250" key="1">
    <source>
        <dbReference type="UniProtKB" id="P0A9B2"/>
    </source>
</evidence>
<evidence type="ECO:0000305" key="2"/>
<comment type="function">
    <text evidence="1">Catalyzes the oxidative phosphorylation of glyceraldehyde 3-phosphate (G3P) to 1,3-bisphosphoglycerate (BPG) using the cofactor NAD. The first reaction step involves the formation of a hemiacetal intermediate between G3P and a cysteine residue, and this hemiacetal intermediate is then oxidized to a thioester, with concomitant reduction of NAD to NADH. The reduced NADH is then exchanged with the second NAD, and the thioester is attacked by a nucleophilic inorganic phosphate to produce BPG.</text>
</comment>
<comment type="catalytic activity">
    <reaction evidence="1">
        <text>D-glyceraldehyde 3-phosphate + phosphate + NAD(+) = (2R)-3-phospho-glyceroyl phosphate + NADH + H(+)</text>
        <dbReference type="Rhea" id="RHEA:10300"/>
        <dbReference type="ChEBI" id="CHEBI:15378"/>
        <dbReference type="ChEBI" id="CHEBI:43474"/>
        <dbReference type="ChEBI" id="CHEBI:57540"/>
        <dbReference type="ChEBI" id="CHEBI:57604"/>
        <dbReference type="ChEBI" id="CHEBI:57945"/>
        <dbReference type="ChEBI" id="CHEBI:59776"/>
        <dbReference type="EC" id="1.2.1.12"/>
    </reaction>
</comment>
<comment type="pathway">
    <text evidence="2">Carbohydrate degradation; glycolysis; pyruvate from D-glyceraldehyde 3-phosphate: step 1/5.</text>
</comment>
<comment type="subunit">
    <text evidence="1">Homotetramer.</text>
</comment>
<comment type="subcellular location">
    <subcellularLocation>
        <location evidence="2">Cytoplasm</location>
    </subcellularLocation>
</comment>
<comment type="similarity">
    <text evidence="2">Belongs to the glyceraldehyde-3-phosphate dehydrogenase family.</text>
</comment>
<protein>
    <recommendedName>
        <fullName evidence="1">Glyceraldehyde-3-phosphate dehydrogenase</fullName>
        <shortName evidence="1">GAPDH</shortName>
        <ecNumber evidence="1">1.2.1.12</ecNumber>
    </recommendedName>
    <alternativeName>
        <fullName evidence="1">NAD-dependent glyceraldehyde-3-phosphate dehydrogenase</fullName>
    </alternativeName>
</protein>
<proteinExistence type="inferred from homology"/>
<organism>
    <name type="scientific">Klebsiella aerogenes</name>
    <name type="common">Enterobacter aerogenes</name>
    <dbReference type="NCBI Taxonomy" id="548"/>
    <lineage>
        <taxon>Bacteria</taxon>
        <taxon>Pseudomonadati</taxon>
        <taxon>Pseudomonadota</taxon>
        <taxon>Gammaproteobacteria</taxon>
        <taxon>Enterobacterales</taxon>
        <taxon>Enterobacteriaceae</taxon>
        <taxon>Klebsiella/Raoultella group</taxon>
        <taxon>Klebsiella</taxon>
    </lineage>
</organism>
<gene>
    <name type="primary">gap</name>
</gene>
<accession>P24163</accession>
<sequence length="294" mass="31448">IVFRAAQKRSDIEIVGINDLLDAEYMAYMLKYDSTHGRFDGTVEVKDGHLVVNGKTIRVTAEKDPANLKWNEIGVDVVAEATGIFLTDETARKHITAGAKKVVLTGPSKDNTPMFVRGANFETYAGQDIVSNRSCTTNCLAPLAKVINDNFGIIEGLMTTVHATTATQKTVDGPSHKDWRGGRGAAQNIIPSSTGAAKAVGKVLPELNGKLTGMAFRVPTPNVSVVDLTVRLEKAASYEEIKKAIKAASEGPMKGVLGYTEDDVVSTDFNGEVCTSVFDAKAGIALNDNFVKLV</sequence>
<dbReference type="EC" id="1.2.1.12" evidence="1"/>
<dbReference type="EMBL" id="M63372">
    <property type="protein sequence ID" value="AAA24801.1"/>
    <property type="molecule type" value="Genomic_DNA"/>
</dbReference>
<dbReference type="SMR" id="P24163"/>
<dbReference type="STRING" id="548.EAG7_01082"/>
<dbReference type="UniPathway" id="UPA00109">
    <property type="reaction ID" value="UER00184"/>
</dbReference>
<dbReference type="GO" id="GO:0005737">
    <property type="term" value="C:cytoplasm"/>
    <property type="evidence" value="ECO:0007669"/>
    <property type="project" value="UniProtKB-SubCell"/>
</dbReference>
<dbReference type="GO" id="GO:0004365">
    <property type="term" value="F:glyceraldehyde-3-phosphate dehydrogenase (NAD+) (phosphorylating) activity"/>
    <property type="evidence" value="ECO:0000250"/>
    <property type="project" value="UniProtKB"/>
</dbReference>
<dbReference type="GO" id="GO:0051287">
    <property type="term" value="F:NAD binding"/>
    <property type="evidence" value="ECO:0000250"/>
    <property type="project" value="UniProtKB"/>
</dbReference>
<dbReference type="GO" id="GO:0050661">
    <property type="term" value="F:NADP binding"/>
    <property type="evidence" value="ECO:0007669"/>
    <property type="project" value="InterPro"/>
</dbReference>
<dbReference type="GO" id="GO:0006006">
    <property type="term" value="P:glucose metabolic process"/>
    <property type="evidence" value="ECO:0007669"/>
    <property type="project" value="InterPro"/>
</dbReference>
<dbReference type="GO" id="GO:0006096">
    <property type="term" value="P:glycolytic process"/>
    <property type="evidence" value="ECO:0007669"/>
    <property type="project" value="UniProtKB-UniPathway"/>
</dbReference>
<dbReference type="CDD" id="cd18126">
    <property type="entry name" value="GAPDH_I_C"/>
    <property type="match status" value="1"/>
</dbReference>
<dbReference type="CDD" id="cd05214">
    <property type="entry name" value="GAPDH_I_N"/>
    <property type="match status" value="1"/>
</dbReference>
<dbReference type="FunFam" id="3.30.360.10:FF:000001">
    <property type="entry name" value="Glyceraldehyde-3-phosphate dehydrogenase"/>
    <property type="match status" value="1"/>
</dbReference>
<dbReference type="FunFam" id="3.40.50.720:FF:000001">
    <property type="entry name" value="Glyceraldehyde-3-phosphate dehydrogenase"/>
    <property type="match status" value="1"/>
</dbReference>
<dbReference type="Gene3D" id="3.30.360.10">
    <property type="entry name" value="Dihydrodipicolinate Reductase, domain 2"/>
    <property type="match status" value="1"/>
</dbReference>
<dbReference type="Gene3D" id="3.40.50.720">
    <property type="entry name" value="NAD(P)-binding Rossmann-like Domain"/>
    <property type="match status" value="1"/>
</dbReference>
<dbReference type="InterPro" id="IPR020831">
    <property type="entry name" value="GlycerAld/Erythrose_P_DH"/>
</dbReference>
<dbReference type="InterPro" id="IPR020829">
    <property type="entry name" value="GlycerAld_3-P_DH_cat"/>
</dbReference>
<dbReference type="InterPro" id="IPR020828">
    <property type="entry name" value="GlycerAld_3-P_DH_NAD(P)-bd"/>
</dbReference>
<dbReference type="InterPro" id="IPR006424">
    <property type="entry name" value="Glyceraldehyde-3-P_DH_1"/>
</dbReference>
<dbReference type="InterPro" id="IPR036291">
    <property type="entry name" value="NAD(P)-bd_dom_sf"/>
</dbReference>
<dbReference type="NCBIfam" id="TIGR01534">
    <property type="entry name" value="GAPDH-I"/>
    <property type="match status" value="1"/>
</dbReference>
<dbReference type="PANTHER" id="PTHR10836">
    <property type="entry name" value="GLYCERALDEHYDE 3-PHOSPHATE DEHYDROGENASE"/>
    <property type="match status" value="1"/>
</dbReference>
<dbReference type="PANTHER" id="PTHR10836:SF76">
    <property type="entry name" value="GLYCERALDEHYDE-3-PHOSPHATE DEHYDROGENASE-RELATED"/>
    <property type="match status" value="1"/>
</dbReference>
<dbReference type="Pfam" id="PF02800">
    <property type="entry name" value="Gp_dh_C"/>
    <property type="match status" value="1"/>
</dbReference>
<dbReference type="Pfam" id="PF00044">
    <property type="entry name" value="Gp_dh_N"/>
    <property type="match status" value="1"/>
</dbReference>
<dbReference type="PIRSF" id="PIRSF000149">
    <property type="entry name" value="GAP_DH"/>
    <property type="match status" value="1"/>
</dbReference>
<dbReference type="PRINTS" id="PR00078">
    <property type="entry name" value="G3PDHDRGNASE"/>
</dbReference>
<dbReference type="SMART" id="SM00846">
    <property type="entry name" value="Gp_dh_N"/>
    <property type="match status" value="1"/>
</dbReference>
<dbReference type="SUPFAM" id="SSF55347">
    <property type="entry name" value="Glyceraldehyde-3-phosphate dehydrogenase-like, C-terminal domain"/>
    <property type="match status" value="1"/>
</dbReference>
<dbReference type="SUPFAM" id="SSF51735">
    <property type="entry name" value="NAD(P)-binding Rossmann-fold domains"/>
    <property type="match status" value="1"/>
</dbReference>
<reference key="1">
    <citation type="journal article" date="1991" name="J. Gen. Microbiol.">
        <title>Molecular and evolutionary relationships among enteric bacteria.</title>
        <authorList>
            <person name="Lawrence J.G."/>
            <person name="Ochman H."/>
            <person name="Hartl D.L."/>
        </authorList>
    </citation>
    <scope>NUCLEOTIDE SEQUENCE [GENOMIC DNA]</scope>
    <source>
        <strain>E482</strain>
    </source>
</reference>